<keyword id="KW-0143">Chaperone</keyword>
<keyword id="KW-0574">Periplasm</keyword>
<keyword id="KW-0732">Signal</keyword>
<organism>
    <name type="scientific">Pseudomonas putida (strain ATCC 700007 / DSM 6899 / JCM 31910 / BCRC 17059 / LMG 24140 / F1)</name>
    <dbReference type="NCBI Taxonomy" id="351746"/>
    <lineage>
        <taxon>Bacteria</taxon>
        <taxon>Pseudomonadati</taxon>
        <taxon>Pseudomonadota</taxon>
        <taxon>Gammaproteobacteria</taxon>
        <taxon>Pseudomonadales</taxon>
        <taxon>Pseudomonadaceae</taxon>
        <taxon>Pseudomonas</taxon>
    </lineage>
</organism>
<gene>
    <name evidence="4" type="primary">fapA</name>
    <name evidence="5" type="ordered locus">Pput_2831</name>
</gene>
<feature type="signal peptide" evidence="2">
    <location>
        <begin position="1"/>
        <end position="27"/>
    </location>
</feature>
<feature type="chain" id="PRO_5002688898" description="Functional amyloid chaperone FapA" evidence="2">
    <location>
        <begin position="28"/>
        <end position="145"/>
    </location>
</feature>
<protein>
    <recommendedName>
        <fullName>Functional amyloid chaperone FapA</fullName>
    </recommendedName>
    <alternativeName>
        <fullName evidence="6">Fibril amyloid chaperone protein FapA</fullName>
    </alternativeName>
</protein>
<name>FAPA_PSEP1</name>
<reference evidence="8" key="1">
    <citation type="submission" date="2007-05" db="EMBL/GenBank/DDBJ databases">
        <title>Complete sequence of Pseudomonas putida F1.</title>
        <authorList>
            <consortium name="US DOE Joint Genome Institute"/>
            <person name="Copeland A."/>
            <person name="Lucas S."/>
            <person name="Lapidus A."/>
            <person name="Barry K."/>
            <person name="Detter J.C."/>
            <person name="Glavina del Rio T."/>
            <person name="Hammon N."/>
            <person name="Israni S."/>
            <person name="Dalin E."/>
            <person name="Tice H."/>
            <person name="Pitluck S."/>
            <person name="Chain P."/>
            <person name="Malfatti S."/>
            <person name="Shin M."/>
            <person name="Vergez L."/>
            <person name="Schmutz J."/>
            <person name="Larimer F."/>
            <person name="Land M."/>
            <person name="Hauser L."/>
            <person name="Kyrpides N."/>
            <person name="Lykidis A."/>
            <person name="Parales R."/>
            <person name="Richardson P."/>
        </authorList>
    </citation>
    <scope>NUCLEOTIDE SEQUENCE [LARGE SCALE GENOMIC DNA]</scope>
    <source>
        <strain>ATCC 700007 / DSM 6899 / JCM 31910 / BCRC 17059 / LMG 24140 / F1</strain>
    </source>
</reference>
<reference key="2">
    <citation type="journal article" date="2013" name="MicrobiologyOpen">
        <title>Expression of Fap amyloids in Pseudomonas aeruginosa, P. fluorescens, and P. putida results in aggregation and increased biofilm formation.</title>
        <authorList>
            <person name="Dueholm M.S."/>
            <person name="Soendergaard M.T."/>
            <person name="Nilsson M."/>
            <person name="Christiansen G."/>
            <person name="Stensballe A."/>
            <person name="Overgaard M.T."/>
            <person name="Givskov M."/>
            <person name="Tolker-Nielsen T."/>
            <person name="Otzen D.E."/>
            <person name="Nielsen P.H."/>
        </authorList>
    </citation>
    <scope>FUNCTION</scope>
    <scope>POSSIBLE SUBCELLULAR LOCATION</scope>
    <scope>DISRUPTION PHENOTYPE</scope>
    <source>
        <strain>ATCC 700007 / DSM 6899 / JCM 31910 / BCRC 17059 / LMG 24140 / F1</strain>
    </source>
</reference>
<proteinExistence type="inferred from homology"/>
<comment type="function">
    <text evidence="1 3">An intrinsically disordered chaperone for fibril amyloid FapC that guards against fibrillation, pro within the periplasm (By similarity). Upon overexpression of the endogenous six-gene locus (fapA-fapF), cells form large clumps during liquid growth, make large amounts of biofilm and produce relatively unstable amyloid fibrils (PubMed:23504942).</text>
</comment>
<comment type="subunit">
    <text evidence="1">Monomer in solution. Interacts with FapC but not FapB in vitro.</text>
</comment>
<comment type="subcellular location">
    <subcellularLocation>
        <location evidence="7">Periplasm</location>
    </subcellularLocation>
</comment>
<comment type="disruption phenotype">
    <text evidence="3">Deletion of just fapA in the overexpressing strain alters the fibril composition; fibrils are shorter, more stable and are composed mainly of FapB with minor amounts of FapC. Deletion of the entire fapA-fapF six-gene locus shows no visible growth phenotype.</text>
</comment>
<comment type="similarity">
    <text evidence="6">Belongs to the FapA family.</text>
</comment>
<sequence>MRKRDKRLYHLLLVGCVLGSLSLTAQADKGIIIIKRDVQVRNATIPPLIPDPSPTTVNANPSAHVLKQTNELSDGDFAGISSGAGISNLVTQQTNNLGGNLGNQNQLPNLAGGRGTGSGNGISNMVNSSVQRGLAPLQILTGGGK</sequence>
<evidence type="ECO:0000250" key="1">
    <source>
        <dbReference type="UniProtKB" id="P0DXF3"/>
    </source>
</evidence>
<evidence type="ECO:0000255" key="2"/>
<evidence type="ECO:0000269" key="3">
    <source>
    </source>
</evidence>
<evidence type="ECO:0000303" key="4">
    <source>
    </source>
</evidence>
<evidence type="ECO:0000303" key="5">
    <source ref="1"/>
</evidence>
<evidence type="ECO:0000305" key="6"/>
<evidence type="ECO:0000305" key="7">
    <source>
    </source>
</evidence>
<evidence type="ECO:0000312" key="8">
    <source>
        <dbReference type="EMBL" id="ABQ78963.1"/>
    </source>
</evidence>
<accession>A5W4A3</accession>
<dbReference type="EMBL" id="CP000712">
    <property type="protein sequence ID" value="ABQ78963.1"/>
    <property type="molecule type" value="Genomic_DNA"/>
</dbReference>
<dbReference type="KEGG" id="ppf:Pput_2831"/>
<dbReference type="eggNOG" id="ENOG5030SRW">
    <property type="taxonomic scope" value="Bacteria"/>
</dbReference>
<dbReference type="HOGENOM" id="CLU_146708_0_0_6"/>
<dbReference type="GO" id="GO:0042597">
    <property type="term" value="C:periplasmic space"/>
    <property type="evidence" value="ECO:0007669"/>
    <property type="project" value="UniProtKB-SubCell"/>
</dbReference>